<sequence length="336" mass="37867">MNLNKMLSNQFDSVVLNVKKTSELVDCSGASVFIIHNNNIVTEEYWGRHSQANNARSIQEDTQFHVASVRKSYIGYAVAYAVQQGLISTDDPITKYLSINSPILQKTTIRHLLTHTHGLKMVNGKLQQEFTSGESWAYRGIGIELLTQIVKITTGQSVAEIVDQVFKSLEFKETGWYGELNEKLVEVIRKPGDPNWYTSKSTDGDKMNMYVSTRELAKWGYFHLKEGLINGKQIVPSEIFKLVTSIQSPNTINEEHPTNGFLWFVQDLPTRRSEIGEYLPKGSFQILGYTGVTLLIVPQHNLVAVRAFNSFGSPEGFNYLADVRKFGDTIMTCLLS</sequence>
<organism>
    <name type="scientific">Alkalihalophilus pseudofirmus (strain ATCC BAA-2126 / JCM 17055 / OF4)</name>
    <name type="common">Bacillus pseudofirmus</name>
    <dbReference type="NCBI Taxonomy" id="398511"/>
    <lineage>
        <taxon>Bacteria</taxon>
        <taxon>Bacillati</taxon>
        <taxon>Bacillota</taxon>
        <taxon>Bacilli</taxon>
        <taxon>Bacillales</taxon>
        <taxon>Bacillaceae</taxon>
        <taxon>Alkalihalophilus</taxon>
    </lineage>
</organism>
<accession>Q45129</accession>
<accession>D3G1H9</accession>
<reference key="1">
    <citation type="journal article" date="1996" name="J. Bacteriol.">
        <title>Purification of a cytochrome bd terminal oxidase encoded by the Escherichia coli app locus from a delta cyo delta cyd strain complemented by genes from Bacillus firmus OF4.</title>
        <authorList>
            <person name="Sturr M.G."/>
            <person name="Krulwich T.A."/>
            <person name="Hicks D.B."/>
        </authorList>
    </citation>
    <scope>NUCLEOTIDE SEQUENCE [GENOMIC DNA]</scope>
</reference>
<reference key="2">
    <citation type="journal article" date="2011" name="Environ. Microbiol.">
        <title>Genome of alkaliphilic Bacillus pseudofirmus OF4 reveals adaptations that support the ability to grow in an external pH range from 7.5 to 11.4.</title>
        <authorList>
            <person name="Janto B."/>
            <person name="Ahmed A."/>
            <person name="Ito M."/>
            <person name="Liu J."/>
            <person name="Hicks D.B."/>
            <person name="Pagni S."/>
            <person name="Fackelmayer O.J."/>
            <person name="Smith T.A."/>
            <person name="Earl J."/>
            <person name="Elbourne L.D."/>
            <person name="Hassan K."/>
            <person name="Paulsen I.T."/>
            <person name="Kolsto A.B."/>
            <person name="Tourasse N.J."/>
            <person name="Ehrlich G.D."/>
            <person name="Boissy R."/>
            <person name="Ivey D.M."/>
            <person name="Li G."/>
            <person name="Xue Y."/>
            <person name="Ma Y."/>
            <person name="Hu F.Z."/>
            <person name="Krulwich T.A."/>
        </authorList>
    </citation>
    <scope>NUCLEOTIDE SEQUENCE [LARGE SCALE GENOMIC DNA]</scope>
    <source>
        <strain>ATCC BAA-2126 / JCM 17055 / OF4</strain>
        <plasmid>pBpOF4-01</plasmid>
    </source>
</reference>
<dbReference type="EMBL" id="U39410">
    <property type="protein sequence ID" value="AAB05369.1"/>
    <property type="molecule type" value="Genomic_DNA"/>
</dbReference>
<dbReference type="EMBL" id="CP001879">
    <property type="protein sequence ID" value="ADC52205.1"/>
    <property type="molecule type" value="Genomic_DNA"/>
</dbReference>
<dbReference type="RefSeq" id="WP_012961114.1">
    <property type="nucleotide sequence ID" value="NC_013792.1"/>
</dbReference>
<dbReference type="SMR" id="Q45129"/>
<dbReference type="KEGG" id="bpf:BpOF4_21049"/>
<dbReference type="eggNOG" id="COG1680">
    <property type="taxonomic scope" value="Bacteria"/>
</dbReference>
<dbReference type="HOGENOM" id="CLU_069761_0_0_9"/>
<dbReference type="Proteomes" id="UP000001544">
    <property type="component" value="Plasmid pBpOF4-01"/>
</dbReference>
<dbReference type="Gene3D" id="3.40.710.10">
    <property type="entry name" value="DD-peptidase/beta-lactamase superfamily"/>
    <property type="match status" value="1"/>
</dbReference>
<dbReference type="InterPro" id="IPR001466">
    <property type="entry name" value="Beta-lactam-related"/>
</dbReference>
<dbReference type="InterPro" id="IPR012338">
    <property type="entry name" value="Beta-lactam/transpept-like"/>
</dbReference>
<dbReference type="InterPro" id="IPR050789">
    <property type="entry name" value="Diverse_Enzym_Activities"/>
</dbReference>
<dbReference type="PANTHER" id="PTHR43283">
    <property type="entry name" value="BETA-LACTAMASE-RELATED"/>
    <property type="match status" value="1"/>
</dbReference>
<dbReference type="PANTHER" id="PTHR43283:SF7">
    <property type="entry name" value="BETA-LACTAMASE-RELATED DOMAIN-CONTAINING PROTEIN"/>
    <property type="match status" value="1"/>
</dbReference>
<dbReference type="Pfam" id="PF00144">
    <property type="entry name" value="Beta-lactamase"/>
    <property type="match status" value="1"/>
</dbReference>
<dbReference type="SUPFAM" id="SSF56601">
    <property type="entry name" value="beta-lactamase/transpeptidase-like"/>
    <property type="match status" value="1"/>
</dbReference>
<protein>
    <recommendedName>
        <fullName>Uncharacterized protein BpOF4_21049</fullName>
    </recommendedName>
    <alternativeName>
        <fullName>ORFA</fullName>
    </alternativeName>
</protein>
<name>Y4209_ALKPO</name>
<evidence type="ECO:0000305" key="1"/>
<geneLocation type="plasmid">
    <name>pBpOF4-01</name>
</geneLocation>
<proteinExistence type="predicted"/>
<feature type="chain" id="PRO_0000066240" description="Uncharacterized protein BpOF4_21049">
    <location>
        <begin position="1"/>
        <end position="336"/>
    </location>
</feature>
<feature type="sequence conflict" description="In Ref. 1; AAB05369." evidence="1" ref="1">
    <original>VTEEYWGR</original>
    <variation>CYRRILGK</variation>
    <location>
        <begin position="41"/>
        <end position="48"/>
    </location>
</feature>
<feature type="sequence conflict" description="In Ref. 1; AAB05369." evidence="1" ref="1">
    <original>E</original>
    <variation>A</variation>
    <location>
        <position position="179"/>
    </location>
</feature>
<feature type="sequence conflict" description="In Ref. 1; AAB05369." evidence="1" ref="1">
    <original>V</original>
    <variation>A</variation>
    <location>
        <position position="235"/>
    </location>
</feature>
<feature type="sequence conflict" description="In Ref. 1; AAB05369." evidence="1" ref="1">
    <original>K</original>
    <variation>N</variation>
    <location>
        <position position="241"/>
    </location>
</feature>
<feature type="sequence conflict" description="In Ref. 1; AAB05369." evidence="1" ref="1">
    <original>N</original>
    <variation>T</variation>
    <location>
        <position position="259"/>
    </location>
</feature>
<gene>
    <name type="ordered locus">BpOF4_21049</name>
</gene>
<keyword id="KW-0614">Plasmid</keyword>
<keyword id="KW-1185">Reference proteome</keyword>